<accession>Q30UT6</accession>
<name>LGT_OLEA2</name>
<feature type="chain" id="PRO_1000053422" description="Phosphatidylglycerol--prolipoprotein diacylglyceryl transferase">
    <location>
        <begin position="1"/>
        <end position="267"/>
    </location>
</feature>
<feature type="transmembrane region" description="Helical" evidence="1">
    <location>
        <begin position="17"/>
        <end position="37"/>
    </location>
</feature>
<feature type="transmembrane region" description="Helical" evidence="1">
    <location>
        <begin position="56"/>
        <end position="76"/>
    </location>
</feature>
<feature type="transmembrane region" description="Helical" evidence="1">
    <location>
        <begin position="91"/>
        <end position="111"/>
    </location>
</feature>
<feature type="transmembrane region" description="Helical" evidence="1">
    <location>
        <begin position="120"/>
        <end position="140"/>
    </location>
</feature>
<feature type="transmembrane region" description="Helical" evidence="1">
    <location>
        <begin position="173"/>
        <end position="193"/>
    </location>
</feature>
<feature type="transmembrane region" description="Helical" evidence="1">
    <location>
        <begin position="199"/>
        <end position="219"/>
    </location>
</feature>
<feature type="transmembrane region" description="Helical" evidence="1">
    <location>
        <begin position="236"/>
        <end position="256"/>
    </location>
</feature>
<feature type="binding site" evidence="1">
    <location>
        <position position="139"/>
    </location>
    <ligand>
        <name>a 1,2-diacyl-sn-glycero-3-phospho-(1'-sn-glycerol)</name>
        <dbReference type="ChEBI" id="CHEBI:64716"/>
    </ligand>
</feature>
<protein>
    <recommendedName>
        <fullName evidence="1">Phosphatidylglycerol--prolipoprotein diacylglyceryl transferase</fullName>
        <ecNumber evidence="1">2.5.1.145</ecNumber>
    </recommendedName>
</protein>
<organism>
    <name type="scientific">Oleidesulfovibrio alaskensis (strain ATCC BAA-1058 / DSM 17464 / G20)</name>
    <name type="common">Desulfovibrio alaskensis</name>
    <dbReference type="NCBI Taxonomy" id="207559"/>
    <lineage>
        <taxon>Bacteria</taxon>
        <taxon>Pseudomonadati</taxon>
        <taxon>Thermodesulfobacteriota</taxon>
        <taxon>Desulfovibrionia</taxon>
        <taxon>Desulfovibrionales</taxon>
        <taxon>Desulfovibrionaceae</taxon>
        <taxon>Oleidesulfovibrio</taxon>
    </lineage>
</organism>
<gene>
    <name evidence="1" type="primary">lgt</name>
    <name type="ordered locus">Dde_3768</name>
</gene>
<sequence>MIKYPAFDPVAFTLGPLNIRWYGLMYILGFVAAWLLARSRALKTGSGWTVEQVDDLVTYSVFGVILGGRLGYTLFYETSYFLNNPLDIFKIWNGGMSFHGGLLGVIIAIWLFARHTGKSLFEVGDFTAPLVAPGLLAGRLGNFINGELWGRHTSAEWGMVFPGAGPLPRHPSQLYEAALEGVALFIILWLFSAKPRPRMAVSGMFLLLYGSFRFFVEFFREPDLHLGYLAFGWVTMGQILCLPMILGGLVLVGFAMKNEKQAALKTE</sequence>
<dbReference type="EC" id="2.5.1.145" evidence="1"/>
<dbReference type="EMBL" id="CP000112">
    <property type="protein sequence ID" value="ABB40560.1"/>
    <property type="molecule type" value="Genomic_DNA"/>
</dbReference>
<dbReference type="RefSeq" id="WP_011369409.1">
    <property type="nucleotide sequence ID" value="NC_007519.1"/>
</dbReference>
<dbReference type="SMR" id="Q30UT6"/>
<dbReference type="STRING" id="207559.Dde_3768"/>
<dbReference type="KEGG" id="dde:Dde_3768"/>
<dbReference type="eggNOG" id="COG0682">
    <property type="taxonomic scope" value="Bacteria"/>
</dbReference>
<dbReference type="HOGENOM" id="CLU_013386_1_0_7"/>
<dbReference type="UniPathway" id="UPA00664"/>
<dbReference type="Proteomes" id="UP000002710">
    <property type="component" value="Chromosome"/>
</dbReference>
<dbReference type="GO" id="GO:0005886">
    <property type="term" value="C:plasma membrane"/>
    <property type="evidence" value="ECO:0007669"/>
    <property type="project" value="UniProtKB-SubCell"/>
</dbReference>
<dbReference type="GO" id="GO:0008961">
    <property type="term" value="F:phosphatidylglycerol-prolipoprotein diacylglyceryl transferase activity"/>
    <property type="evidence" value="ECO:0007669"/>
    <property type="project" value="UniProtKB-UniRule"/>
</dbReference>
<dbReference type="GO" id="GO:0042158">
    <property type="term" value="P:lipoprotein biosynthetic process"/>
    <property type="evidence" value="ECO:0007669"/>
    <property type="project" value="UniProtKB-UniRule"/>
</dbReference>
<dbReference type="HAMAP" id="MF_01147">
    <property type="entry name" value="Lgt"/>
    <property type="match status" value="1"/>
</dbReference>
<dbReference type="InterPro" id="IPR001640">
    <property type="entry name" value="Lgt"/>
</dbReference>
<dbReference type="NCBIfam" id="TIGR00544">
    <property type="entry name" value="lgt"/>
    <property type="match status" value="1"/>
</dbReference>
<dbReference type="PANTHER" id="PTHR30589:SF0">
    <property type="entry name" value="PHOSPHATIDYLGLYCEROL--PROLIPOPROTEIN DIACYLGLYCERYL TRANSFERASE"/>
    <property type="match status" value="1"/>
</dbReference>
<dbReference type="PANTHER" id="PTHR30589">
    <property type="entry name" value="PROLIPOPROTEIN DIACYLGLYCERYL TRANSFERASE"/>
    <property type="match status" value="1"/>
</dbReference>
<dbReference type="Pfam" id="PF01790">
    <property type="entry name" value="LGT"/>
    <property type="match status" value="1"/>
</dbReference>
<dbReference type="PROSITE" id="PS01311">
    <property type="entry name" value="LGT"/>
    <property type="match status" value="1"/>
</dbReference>
<proteinExistence type="inferred from homology"/>
<evidence type="ECO:0000255" key="1">
    <source>
        <dbReference type="HAMAP-Rule" id="MF_01147"/>
    </source>
</evidence>
<keyword id="KW-0997">Cell inner membrane</keyword>
<keyword id="KW-1003">Cell membrane</keyword>
<keyword id="KW-0472">Membrane</keyword>
<keyword id="KW-1185">Reference proteome</keyword>
<keyword id="KW-0808">Transferase</keyword>
<keyword id="KW-0812">Transmembrane</keyword>
<keyword id="KW-1133">Transmembrane helix</keyword>
<comment type="function">
    <text evidence="1">Catalyzes the transfer of the diacylglyceryl group from phosphatidylglycerol to the sulfhydryl group of the N-terminal cysteine of a prolipoprotein, the first step in the formation of mature lipoproteins.</text>
</comment>
<comment type="catalytic activity">
    <reaction evidence="1">
        <text>L-cysteinyl-[prolipoprotein] + a 1,2-diacyl-sn-glycero-3-phospho-(1'-sn-glycerol) = an S-1,2-diacyl-sn-glyceryl-L-cysteinyl-[prolipoprotein] + sn-glycerol 1-phosphate + H(+)</text>
        <dbReference type="Rhea" id="RHEA:56712"/>
        <dbReference type="Rhea" id="RHEA-COMP:14679"/>
        <dbReference type="Rhea" id="RHEA-COMP:14680"/>
        <dbReference type="ChEBI" id="CHEBI:15378"/>
        <dbReference type="ChEBI" id="CHEBI:29950"/>
        <dbReference type="ChEBI" id="CHEBI:57685"/>
        <dbReference type="ChEBI" id="CHEBI:64716"/>
        <dbReference type="ChEBI" id="CHEBI:140658"/>
        <dbReference type="EC" id="2.5.1.145"/>
    </reaction>
</comment>
<comment type="pathway">
    <text evidence="1">Protein modification; lipoprotein biosynthesis (diacylglyceryl transfer).</text>
</comment>
<comment type="subcellular location">
    <subcellularLocation>
        <location evidence="1">Cell inner membrane</location>
        <topology evidence="1">Multi-pass membrane protein</topology>
    </subcellularLocation>
</comment>
<comment type="similarity">
    <text evidence="1">Belongs to the Lgt family.</text>
</comment>
<reference key="1">
    <citation type="journal article" date="2011" name="J. Bacteriol.">
        <title>Complete genome sequence and updated annotation of Desulfovibrio alaskensis G20.</title>
        <authorList>
            <person name="Hauser L.J."/>
            <person name="Land M.L."/>
            <person name="Brown S.D."/>
            <person name="Larimer F."/>
            <person name="Keller K.L."/>
            <person name="Rapp-Giles B.J."/>
            <person name="Price M.N."/>
            <person name="Lin M."/>
            <person name="Bruce D.C."/>
            <person name="Detter J.C."/>
            <person name="Tapia R."/>
            <person name="Han C.S."/>
            <person name="Goodwin L.A."/>
            <person name="Cheng J.F."/>
            <person name="Pitluck S."/>
            <person name="Copeland A."/>
            <person name="Lucas S."/>
            <person name="Nolan M."/>
            <person name="Lapidus A.L."/>
            <person name="Palumbo A.V."/>
            <person name="Wall J.D."/>
        </authorList>
    </citation>
    <scope>NUCLEOTIDE SEQUENCE [LARGE SCALE GENOMIC DNA]</scope>
    <source>
        <strain>ATCC BAA-1058 / DSM 17464 / G20</strain>
    </source>
</reference>